<gene>
    <name type="primary">srtA</name>
    <name type="ordered locus">SPy_1083</name>
    <name type="ordered locus">M5005_Spy0806</name>
</gene>
<comment type="function">
    <text evidence="1">Lanthionine-containing peptide antibiotic (lantibiotic) active on certain Gram-positive bacteria. The bactericidal activity of lantibiotics is based on depolarization of energized bacterial cytoplasmic membranes, initiated by the formation of aqueous transmembrane pores (By similarity).</text>
</comment>
<comment type="PTM">
    <text evidence="1">Maturation of lantibiotics involves the enzymatic conversion of Thr, and Ser into dehydrated AA and the formation of thioether bonds with cysteine. This is followed by membrane translocation and cleavage of the modified precursor (By similarity).</text>
</comment>
<comment type="similarity">
    <text evidence="2">Belongs to the type A lantibiotic family.</text>
</comment>
<sequence>MNNTIKDFDLDLKTNKKDTATPYVGSRYLCTPGSCWKLVCFTTTVK</sequence>
<feature type="propeptide" id="PRO_0000041937" evidence="1">
    <location>
        <begin position="1"/>
        <end position="24"/>
    </location>
</feature>
<feature type="peptide" id="PRO_0000041938" description="Lantibiotic streptin">
    <location>
        <begin position="25"/>
        <end position="46"/>
    </location>
</feature>
<evidence type="ECO:0000250" key="1"/>
<evidence type="ECO:0000305" key="2"/>
<name>SRTA_STRP1</name>
<keyword id="KW-0044">Antibiotic</keyword>
<keyword id="KW-0929">Antimicrobial</keyword>
<keyword id="KW-0078">Bacteriocin</keyword>
<keyword id="KW-0425">Lantibiotic</keyword>
<keyword id="KW-1185">Reference proteome</keyword>
<proteinExistence type="inferred from homology"/>
<dbReference type="EMBL" id="AE004092">
    <property type="protein sequence ID" value="AAK33966.1"/>
    <property type="molecule type" value="Genomic_DNA"/>
</dbReference>
<dbReference type="EMBL" id="CP000017">
    <property type="protein sequence ID" value="AAZ51424.1"/>
    <property type="molecule type" value="Genomic_DNA"/>
</dbReference>
<dbReference type="RefSeq" id="NP_269245.1">
    <property type="nucleotide sequence ID" value="NC_002737.2"/>
</dbReference>
<dbReference type="SMR" id="P0C0H9"/>
<dbReference type="PaxDb" id="1314-HKU360_00871"/>
<dbReference type="KEGG" id="spy:SPy_1083"/>
<dbReference type="KEGG" id="spz:M5005_Spy0806"/>
<dbReference type="PATRIC" id="fig|160490.10.peg.938"/>
<dbReference type="HOGENOM" id="CLU_3189664_0_0_9"/>
<dbReference type="PHI-base" id="PHI:8562"/>
<dbReference type="Proteomes" id="UP000000750">
    <property type="component" value="Chromosome"/>
</dbReference>
<dbReference type="GO" id="GO:0005576">
    <property type="term" value="C:extracellular region"/>
    <property type="evidence" value="ECO:0007669"/>
    <property type="project" value="InterPro"/>
</dbReference>
<dbReference type="GO" id="GO:0005102">
    <property type="term" value="F:signaling receptor binding"/>
    <property type="evidence" value="ECO:0007669"/>
    <property type="project" value="UniProtKB-KW"/>
</dbReference>
<dbReference type="GO" id="GO:0042742">
    <property type="term" value="P:defense response to bacterium"/>
    <property type="evidence" value="ECO:0007669"/>
    <property type="project" value="UniProtKB-KW"/>
</dbReference>
<dbReference type="GO" id="GO:0031640">
    <property type="term" value="P:killing of cells of another organism"/>
    <property type="evidence" value="ECO:0007669"/>
    <property type="project" value="UniProtKB-KW"/>
</dbReference>
<dbReference type="InterPro" id="IPR006079">
    <property type="entry name" value="Lantibiotic_typ-A_Bacillales"/>
</dbReference>
<dbReference type="NCBIfam" id="NF038155">
    <property type="entry name" value="lanthi_I_FDLD"/>
    <property type="match status" value="1"/>
</dbReference>
<dbReference type="NCBIfam" id="TIGR03731">
    <property type="entry name" value="lantibio_gallid"/>
    <property type="match status" value="1"/>
</dbReference>
<accession>P0C0H9</accession>
<accession>Q48YZ4</accession>
<accession>Q9FDV1</accession>
<organism>
    <name type="scientific">Streptococcus pyogenes serotype M1</name>
    <dbReference type="NCBI Taxonomy" id="301447"/>
    <lineage>
        <taxon>Bacteria</taxon>
        <taxon>Bacillati</taxon>
        <taxon>Bacillota</taxon>
        <taxon>Bacilli</taxon>
        <taxon>Lactobacillales</taxon>
        <taxon>Streptococcaceae</taxon>
        <taxon>Streptococcus</taxon>
    </lineage>
</organism>
<reference key="1">
    <citation type="journal article" date="2001" name="Proc. Natl. Acad. Sci. U.S.A.">
        <title>Complete genome sequence of an M1 strain of Streptococcus pyogenes.</title>
        <authorList>
            <person name="Ferretti J.J."/>
            <person name="McShan W.M."/>
            <person name="Ajdic D.J."/>
            <person name="Savic D.J."/>
            <person name="Savic G."/>
            <person name="Lyon K."/>
            <person name="Primeaux C."/>
            <person name="Sezate S."/>
            <person name="Suvorov A.N."/>
            <person name="Kenton S."/>
            <person name="Lai H.S."/>
            <person name="Lin S.P."/>
            <person name="Qian Y."/>
            <person name="Jia H.G."/>
            <person name="Najar F.Z."/>
            <person name="Ren Q."/>
            <person name="Zhu H."/>
            <person name="Song L."/>
            <person name="White J."/>
            <person name="Yuan X."/>
            <person name="Clifton S.W."/>
            <person name="Roe B.A."/>
            <person name="McLaughlin R.E."/>
        </authorList>
    </citation>
    <scope>NUCLEOTIDE SEQUENCE [LARGE SCALE GENOMIC DNA]</scope>
    <source>
        <strain>ATCC 700294 / SF370 / Serotype M1</strain>
    </source>
</reference>
<reference key="2">
    <citation type="journal article" date="2005" name="J. Infect. Dis.">
        <title>Evolutionary origin and emergence of a highly successful clone of serotype M1 group A Streptococcus involved multiple horizontal gene transfer events.</title>
        <authorList>
            <person name="Sumby P."/>
            <person name="Porcella S.F."/>
            <person name="Madrigal A.G."/>
            <person name="Barbian K.D."/>
            <person name="Virtaneva K."/>
            <person name="Ricklefs S.M."/>
            <person name="Sturdevant D.E."/>
            <person name="Graham M.R."/>
            <person name="Vuopio-Varkila J."/>
            <person name="Hoe N.P."/>
            <person name="Musser J.M."/>
        </authorList>
    </citation>
    <scope>NUCLEOTIDE SEQUENCE [LARGE SCALE GENOMIC DNA]</scope>
    <source>
        <strain>ATCC BAA-947 / MGAS5005 / Serotype M1</strain>
    </source>
</reference>
<protein>
    <recommendedName>
        <fullName>Lantibiotic streptin</fullName>
    </recommendedName>
</protein>